<organism>
    <name type="scientific">Sordaria macrospora (strain ATCC MYA-333 / DSM 997 / K(L3346) / K-hell)</name>
    <dbReference type="NCBI Taxonomy" id="771870"/>
    <lineage>
        <taxon>Eukaryota</taxon>
        <taxon>Fungi</taxon>
        <taxon>Dikarya</taxon>
        <taxon>Ascomycota</taxon>
        <taxon>Pezizomycotina</taxon>
        <taxon>Sordariomycetes</taxon>
        <taxon>Sordariomycetidae</taxon>
        <taxon>Sordariales</taxon>
        <taxon>Sordariaceae</taxon>
        <taxon>Sordaria</taxon>
    </lineage>
</organism>
<proteinExistence type="inferred from homology"/>
<gene>
    <name type="primary">ACL1</name>
    <name type="synonym">ACL</name>
    <name type="ORF">SMAC_06775</name>
</gene>
<keyword id="KW-0067">ATP-binding</keyword>
<keyword id="KW-0963">Cytoplasm</keyword>
<keyword id="KW-0444">Lipid biosynthesis</keyword>
<keyword id="KW-0443">Lipid metabolism</keyword>
<keyword id="KW-0460">Magnesium</keyword>
<keyword id="KW-0479">Metal-binding</keyword>
<keyword id="KW-0547">Nucleotide-binding</keyword>
<keyword id="KW-0597">Phosphoprotein</keyword>
<keyword id="KW-1185">Reference proteome</keyword>
<keyword id="KW-0808">Transferase</keyword>
<dbReference type="EC" id="2.3.3.8"/>
<dbReference type="EMBL" id="AJ224922">
    <property type="protein sequence ID" value="CAA12224.1"/>
    <property type="molecule type" value="Genomic_DNA"/>
</dbReference>
<dbReference type="EMBL" id="AJ243817">
    <property type="protein sequence ID" value="CAB76165.1"/>
    <property type="molecule type" value="Genomic_DNA"/>
</dbReference>
<dbReference type="EMBL" id="CABT02000003">
    <property type="protein sequence ID" value="CCC07573.1"/>
    <property type="molecule type" value="Genomic_DNA"/>
</dbReference>
<dbReference type="RefSeq" id="XP_003344998.1">
    <property type="nucleotide sequence ID" value="XM_003344950.1"/>
</dbReference>
<dbReference type="SMR" id="O93988"/>
<dbReference type="STRING" id="771870.O93988"/>
<dbReference type="GeneID" id="10802343"/>
<dbReference type="KEGG" id="smp:10802343"/>
<dbReference type="VEuPathDB" id="FungiDB:SMAC_06775"/>
<dbReference type="eggNOG" id="KOG1254">
    <property type="taxonomic scope" value="Eukaryota"/>
</dbReference>
<dbReference type="HOGENOM" id="CLU_006587_4_1_1"/>
<dbReference type="InParanoid" id="O93988"/>
<dbReference type="OMA" id="HMLRYQA"/>
<dbReference type="OrthoDB" id="3261737at2759"/>
<dbReference type="Proteomes" id="UP000001881">
    <property type="component" value="Unassembled WGS sequence"/>
</dbReference>
<dbReference type="GO" id="GO:0005829">
    <property type="term" value="C:cytosol"/>
    <property type="evidence" value="ECO:0007669"/>
    <property type="project" value="TreeGrafter"/>
</dbReference>
<dbReference type="GO" id="GO:0005524">
    <property type="term" value="F:ATP binding"/>
    <property type="evidence" value="ECO:0007669"/>
    <property type="project" value="UniProtKB-KW"/>
</dbReference>
<dbReference type="GO" id="GO:0003878">
    <property type="term" value="F:ATP citrate synthase activity"/>
    <property type="evidence" value="ECO:0007669"/>
    <property type="project" value="UniProtKB-EC"/>
</dbReference>
<dbReference type="GO" id="GO:0046872">
    <property type="term" value="F:metal ion binding"/>
    <property type="evidence" value="ECO:0007669"/>
    <property type="project" value="UniProtKB-KW"/>
</dbReference>
<dbReference type="GO" id="GO:0006085">
    <property type="term" value="P:acetyl-CoA biosynthetic process"/>
    <property type="evidence" value="ECO:0007669"/>
    <property type="project" value="TreeGrafter"/>
</dbReference>
<dbReference type="GO" id="GO:0006633">
    <property type="term" value="P:fatty acid biosynthetic process"/>
    <property type="evidence" value="ECO:0007669"/>
    <property type="project" value="TreeGrafter"/>
</dbReference>
<dbReference type="CDD" id="cd06100">
    <property type="entry name" value="CCL_ACL-C"/>
    <property type="match status" value="1"/>
</dbReference>
<dbReference type="FunFam" id="3.40.50.261:FF:000003">
    <property type="entry name" value="ATP-citrate synthase subunit"/>
    <property type="match status" value="1"/>
</dbReference>
<dbReference type="FunFam" id="1.10.230.10:FF:000005">
    <property type="entry name" value="ATP-citrate synthase subunit 1"/>
    <property type="match status" value="1"/>
</dbReference>
<dbReference type="FunFam" id="3.40.50.720:FF:000024">
    <property type="entry name" value="Probable ATP-citrate synthase"/>
    <property type="match status" value="1"/>
</dbReference>
<dbReference type="Gene3D" id="1.10.580.10">
    <property type="entry name" value="Citrate Synthase, domain 1"/>
    <property type="match status" value="1"/>
</dbReference>
<dbReference type="Gene3D" id="1.10.230.10">
    <property type="entry name" value="Cytochrome P450-Terp, domain 2"/>
    <property type="match status" value="1"/>
</dbReference>
<dbReference type="Gene3D" id="3.40.50.720">
    <property type="entry name" value="NAD(P)-binding Rossmann-like Domain"/>
    <property type="match status" value="1"/>
</dbReference>
<dbReference type="Gene3D" id="3.40.50.261">
    <property type="entry name" value="Succinyl-CoA synthetase domains"/>
    <property type="match status" value="1"/>
</dbReference>
<dbReference type="InterPro" id="IPR017440">
    <property type="entry name" value="Cit_synth/succinyl-CoA_lig_AS"/>
</dbReference>
<dbReference type="InterPro" id="IPR016142">
    <property type="entry name" value="Citrate_synth-like_lrg_a-sub"/>
</dbReference>
<dbReference type="InterPro" id="IPR016143">
    <property type="entry name" value="Citrate_synth-like_sm_a-sub"/>
</dbReference>
<dbReference type="InterPro" id="IPR002020">
    <property type="entry name" value="Citrate_synthase"/>
</dbReference>
<dbReference type="InterPro" id="IPR036969">
    <property type="entry name" value="Citrate_synthase_sf"/>
</dbReference>
<dbReference type="InterPro" id="IPR033847">
    <property type="entry name" value="Citrt_syn/SCS-alpha_CS"/>
</dbReference>
<dbReference type="InterPro" id="IPR003781">
    <property type="entry name" value="CoA-bd"/>
</dbReference>
<dbReference type="InterPro" id="IPR036291">
    <property type="entry name" value="NAD(P)-bd_dom_sf"/>
</dbReference>
<dbReference type="InterPro" id="IPR017866">
    <property type="entry name" value="Succ-CoA_synthase_bsu_CS"/>
</dbReference>
<dbReference type="InterPro" id="IPR005811">
    <property type="entry name" value="SUCC_ACL_C"/>
</dbReference>
<dbReference type="InterPro" id="IPR016102">
    <property type="entry name" value="Succinyl-CoA_synth-like"/>
</dbReference>
<dbReference type="PANTHER" id="PTHR23118">
    <property type="entry name" value="ATP-CITRATE SYNTHASE"/>
    <property type="match status" value="1"/>
</dbReference>
<dbReference type="PANTHER" id="PTHR23118:SF42">
    <property type="entry name" value="ATP-CITRATE SYNTHASE"/>
    <property type="match status" value="1"/>
</dbReference>
<dbReference type="Pfam" id="PF00285">
    <property type="entry name" value="Citrate_synt"/>
    <property type="match status" value="1"/>
</dbReference>
<dbReference type="Pfam" id="PF02629">
    <property type="entry name" value="CoA_binding"/>
    <property type="match status" value="1"/>
</dbReference>
<dbReference type="Pfam" id="PF00549">
    <property type="entry name" value="Ligase_CoA"/>
    <property type="match status" value="1"/>
</dbReference>
<dbReference type="PRINTS" id="PR01798">
    <property type="entry name" value="SCOASYNTHASE"/>
</dbReference>
<dbReference type="SMART" id="SM00881">
    <property type="entry name" value="CoA_binding"/>
    <property type="match status" value="1"/>
</dbReference>
<dbReference type="SUPFAM" id="SSF48256">
    <property type="entry name" value="Citrate synthase"/>
    <property type="match status" value="1"/>
</dbReference>
<dbReference type="SUPFAM" id="SSF51735">
    <property type="entry name" value="NAD(P)-binding Rossmann-fold domains"/>
    <property type="match status" value="1"/>
</dbReference>
<dbReference type="PROSITE" id="PS01216">
    <property type="entry name" value="SUCCINYL_COA_LIG_1"/>
    <property type="match status" value="1"/>
</dbReference>
<dbReference type="PROSITE" id="PS00399">
    <property type="entry name" value="SUCCINYL_COA_LIG_2"/>
    <property type="match status" value="1"/>
</dbReference>
<dbReference type="PROSITE" id="PS01217">
    <property type="entry name" value="SUCCINYL_COA_LIG_3"/>
    <property type="match status" value="1"/>
</dbReference>
<name>ACL1_SORMK</name>
<comment type="function">
    <text>Catalyzes the formation of cytosolic acetyl-CoA, which is mainly used for the biosynthesis of fatty acids and sterols.</text>
</comment>
<comment type="catalytic activity">
    <reaction>
        <text>oxaloacetate + acetyl-CoA + ADP + phosphate = citrate + ATP + CoA</text>
        <dbReference type="Rhea" id="RHEA:21160"/>
        <dbReference type="ChEBI" id="CHEBI:16452"/>
        <dbReference type="ChEBI" id="CHEBI:16947"/>
        <dbReference type="ChEBI" id="CHEBI:30616"/>
        <dbReference type="ChEBI" id="CHEBI:43474"/>
        <dbReference type="ChEBI" id="CHEBI:57287"/>
        <dbReference type="ChEBI" id="CHEBI:57288"/>
        <dbReference type="ChEBI" id="CHEBI:456216"/>
        <dbReference type="EC" id="2.3.3.8"/>
    </reaction>
</comment>
<comment type="subunit">
    <text>Composed of two subunits.</text>
</comment>
<comment type="subcellular location">
    <subcellularLocation>
        <location>Cytoplasm</location>
    </subcellularLocation>
</comment>
<comment type="similarity">
    <text evidence="4">Belongs to the succinate/malate CoA ligase alpha subunit family.</text>
</comment>
<reference key="1">
    <citation type="journal article" date="1999" name="Mol. Cell. Biol.">
        <title>Cell differentiation during sexual development of the fungus Sordaria macrospora requires ATP citrate lyase activity.</title>
        <authorList>
            <person name="Nowrousian M."/>
            <person name="Masloff S."/>
            <person name="Poeggeler S."/>
            <person name="Kueck U."/>
        </authorList>
    </citation>
    <scope>NUCLEOTIDE SEQUENCE [GENOMIC DNA]</scope>
    <source>
        <strain>ATCC MYA-333 / DSM 997 / K(L3346) / K-hell</strain>
    </source>
</reference>
<reference key="2">
    <citation type="journal article" date="2000" name="Curr. Genet.">
        <title>The fungal acl1 and acl2 genes encode two polypeptides with homology to the N- and C-terminal parts of the animal ATP citrate lyase polypeptide.</title>
        <authorList>
            <person name="Nowrousian M."/>
            <person name="Kueck U."/>
            <person name="Loser K."/>
            <person name="Weltring K.-M."/>
        </authorList>
    </citation>
    <scope>NUCLEOTIDE SEQUENCE [GENOMIC DNA]</scope>
    <source>
        <strain>ATCC MYA-333 / DSM 997 / K(L3346) / K-hell</strain>
    </source>
</reference>
<reference key="3">
    <citation type="journal article" date="2010" name="PLoS Genet.">
        <title>De novo assembly of a 40 Mb eukaryotic genome from short sequence reads: Sordaria macrospora, a model organism for fungal morphogenesis.</title>
        <authorList>
            <person name="Nowrousian M."/>
            <person name="Stajich J.E."/>
            <person name="Chu M."/>
            <person name="Engh I."/>
            <person name="Espagne E."/>
            <person name="Halliday K."/>
            <person name="Kamerewerd J."/>
            <person name="Kempken F."/>
            <person name="Knab B."/>
            <person name="Kuo H.-C."/>
            <person name="Osiewacz H.D."/>
            <person name="Poeggeler S."/>
            <person name="Read N.D."/>
            <person name="Seiler S."/>
            <person name="Smith K.M."/>
            <person name="Zickler D."/>
            <person name="Kueck U."/>
            <person name="Freitag M."/>
        </authorList>
    </citation>
    <scope>NUCLEOTIDE SEQUENCE [LARGE SCALE GENOMIC DNA]</scope>
    <source>
        <strain>ATCC MYA-333 / DSM 997 / K(L3346) / K-hell</strain>
    </source>
</reference>
<protein>
    <recommendedName>
        <fullName>ATP-citrate synthase subunit 1</fullName>
        <ecNumber>2.3.3.8</ecNumber>
    </recommendedName>
    <alternativeName>
        <fullName>ATP-citrate (pro-S-)-lyase 1</fullName>
    </alternativeName>
    <alternativeName>
        <fullName>Citrate cleavage enzyme subunit 1</fullName>
    </alternativeName>
</protein>
<evidence type="ECO:0000250" key="1"/>
<evidence type="ECO:0000255" key="2"/>
<evidence type="ECO:0000256" key="3">
    <source>
        <dbReference type="SAM" id="MobiDB-lite"/>
    </source>
</evidence>
<evidence type="ECO:0000305" key="4"/>
<feature type="chain" id="PRO_0000102787" description="ATP-citrate synthase subunit 1">
    <location>
        <begin position="1"/>
        <end position="674"/>
    </location>
</feature>
<feature type="region of interest" description="Disordered" evidence="3">
    <location>
        <begin position="1"/>
        <end position="26"/>
    </location>
</feature>
<feature type="compositionally biased region" description="Low complexity" evidence="3">
    <location>
        <begin position="1"/>
        <end position="10"/>
    </location>
</feature>
<feature type="active site" description="Tele-phosphohistidine intermediate" evidence="1">
    <location>
        <position position="320"/>
    </location>
</feature>
<feature type="binding site" evidence="1">
    <location>
        <begin position="261"/>
        <end position="281"/>
    </location>
    <ligand>
        <name>ATP</name>
        <dbReference type="ChEBI" id="CHEBI:30616"/>
    </ligand>
</feature>
<feature type="binding site" evidence="1">
    <location>
        <position position="278"/>
    </location>
    <ligand>
        <name>Mg(2+)</name>
        <dbReference type="ChEBI" id="CHEBI:18420"/>
    </ligand>
</feature>
<feature type="binding site" evidence="1">
    <location>
        <begin position="312"/>
        <end position="338"/>
    </location>
    <ligand>
        <name>ATP</name>
        <dbReference type="ChEBI" id="CHEBI:30616"/>
    </ligand>
</feature>
<feature type="binding site" evidence="2">
    <location>
        <begin position="339"/>
        <end position="349"/>
    </location>
    <ligand>
        <name>CoA</name>
        <dbReference type="ChEBI" id="CHEBI:57287"/>
    </ligand>
</feature>
<accession>O93988</accession>
<accession>D1ZRT9</accession>
<accession>F7VPZ5</accession>
<sequence>MPSATSTNGANGNGNGNGASASPAPGNLSANDNIRRFAAPSRPLSPLPAHALFNEKTRCFVYGLQPRAVQGMLDFDFICKRSTPSVAGIIYTFGGQFVSKMYWGTSETLLPVYQEVQKAIAKHPDVDVVVNFASSRSVYSSTMELMEHPQIKTIAIIAEGVPERRAREIAYVAKKKGITIIGPATVGGIKPGCFKIGNTGGMMDNIVASKLYRKGSVGYVSKSGGMSNELNNIISQTTDGVYEGVAIGGDRYPGTTFIDHLLRYQADPACKILVLLGEVGGVEEYKVIEAVKQGIITKPIVAWAIGTCASMFKTEVQFGHAGAFANSQLETAATKNKSMREAGFYVPDTFEDMPALLKQVYDKLVADGTIVPAPEPVVPKIPIDYSWAQELGLIRKPAAFISTISDDRGQELLYAGMPISDVFREEIGIGGVMSLLWFRRRLPDYAAKFLEMVLMLTADHGPAVSGAMNTIITTRAGKDLISSLVAGLLTIGSRFGGALDGAAEEFTKAFDKGLSPREFVDTMRKQNKLIPGIGHRVKSRNNPDLRVELVKEYVKAKFPSSKLLDYALAVETVTTSKKDNLILNVDGCIAVCFVDLLRNCGAFSTEEAEDYLSMGVLNGLFVLGRSIGLIAHYLDQKRLRTGLYRHPWDDITYLLPSLQQPGPPGTEGRVEVQI</sequence>